<name>HFQ_SHESA</name>
<proteinExistence type="inferred from homology"/>
<comment type="function">
    <text evidence="1">RNA chaperone that binds small regulatory RNA (sRNAs) and mRNAs to facilitate mRNA translational regulation in response to envelope stress, environmental stress and changes in metabolite concentrations. Also binds with high specificity to tRNAs.</text>
</comment>
<comment type="subunit">
    <text evidence="1">Homohexamer.</text>
</comment>
<comment type="similarity">
    <text evidence="1">Belongs to the Hfq family.</text>
</comment>
<feature type="chain" id="PRO_1000025937" description="RNA-binding protein Hfq">
    <location>
        <begin position="1"/>
        <end position="90"/>
    </location>
</feature>
<feature type="domain" description="Sm" evidence="2">
    <location>
        <begin position="9"/>
        <end position="68"/>
    </location>
</feature>
<gene>
    <name evidence="1" type="primary">hfq</name>
    <name type="ordered locus">Shewana3_0597</name>
</gene>
<organism>
    <name type="scientific">Shewanella sp. (strain ANA-3)</name>
    <dbReference type="NCBI Taxonomy" id="94122"/>
    <lineage>
        <taxon>Bacteria</taxon>
        <taxon>Pseudomonadati</taxon>
        <taxon>Pseudomonadota</taxon>
        <taxon>Gammaproteobacteria</taxon>
        <taxon>Alteromonadales</taxon>
        <taxon>Shewanellaceae</taxon>
        <taxon>Shewanella</taxon>
    </lineage>
</organism>
<dbReference type="EMBL" id="CP000469">
    <property type="protein sequence ID" value="ABK46836.1"/>
    <property type="molecule type" value="Genomic_DNA"/>
</dbReference>
<dbReference type="RefSeq" id="WP_011070934.1">
    <property type="nucleotide sequence ID" value="NC_008577.1"/>
</dbReference>
<dbReference type="SMR" id="A0KSR7"/>
<dbReference type="STRING" id="94122.Shewana3_0597"/>
<dbReference type="GeneID" id="94726586"/>
<dbReference type="KEGG" id="shn:Shewana3_0597"/>
<dbReference type="eggNOG" id="COG1923">
    <property type="taxonomic scope" value="Bacteria"/>
</dbReference>
<dbReference type="HOGENOM" id="CLU_113688_2_2_6"/>
<dbReference type="OrthoDB" id="9799751at2"/>
<dbReference type="Proteomes" id="UP000002589">
    <property type="component" value="Chromosome"/>
</dbReference>
<dbReference type="GO" id="GO:0005829">
    <property type="term" value="C:cytosol"/>
    <property type="evidence" value="ECO:0007669"/>
    <property type="project" value="TreeGrafter"/>
</dbReference>
<dbReference type="GO" id="GO:0003723">
    <property type="term" value="F:RNA binding"/>
    <property type="evidence" value="ECO:0007669"/>
    <property type="project" value="UniProtKB-UniRule"/>
</dbReference>
<dbReference type="GO" id="GO:0006355">
    <property type="term" value="P:regulation of DNA-templated transcription"/>
    <property type="evidence" value="ECO:0007669"/>
    <property type="project" value="InterPro"/>
</dbReference>
<dbReference type="GO" id="GO:0043487">
    <property type="term" value="P:regulation of RNA stability"/>
    <property type="evidence" value="ECO:0007669"/>
    <property type="project" value="TreeGrafter"/>
</dbReference>
<dbReference type="GO" id="GO:0045974">
    <property type="term" value="P:regulation of translation, ncRNA-mediated"/>
    <property type="evidence" value="ECO:0007669"/>
    <property type="project" value="TreeGrafter"/>
</dbReference>
<dbReference type="CDD" id="cd01716">
    <property type="entry name" value="Hfq"/>
    <property type="match status" value="1"/>
</dbReference>
<dbReference type="FunFam" id="2.30.30.100:FF:000001">
    <property type="entry name" value="RNA-binding protein Hfq"/>
    <property type="match status" value="1"/>
</dbReference>
<dbReference type="Gene3D" id="2.30.30.100">
    <property type="match status" value="1"/>
</dbReference>
<dbReference type="HAMAP" id="MF_00436">
    <property type="entry name" value="Hfq"/>
    <property type="match status" value="1"/>
</dbReference>
<dbReference type="InterPro" id="IPR005001">
    <property type="entry name" value="Hfq"/>
</dbReference>
<dbReference type="InterPro" id="IPR010920">
    <property type="entry name" value="LSM_dom_sf"/>
</dbReference>
<dbReference type="InterPro" id="IPR047575">
    <property type="entry name" value="Sm"/>
</dbReference>
<dbReference type="NCBIfam" id="TIGR02383">
    <property type="entry name" value="Hfq"/>
    <property type="match status" value="1"/>
</dbReference>
<dbReference type="NCBIfam" id="NF001602">
    <property type="entry name" value="PRK00395.1"/>
    <property type="match status" value="1"/>
</dbReference>
<dbReference type="PANTHER" id="PTHR34772">
    <property type="entry name" value="RNA-BINDING PROTEIN HFQ"/>
    <property type="match status" value="1"/>
</dbReference>
<dbReference type="PANTHER" id="PTHR34772:SF1">
    <property type="entry name" value="RNA-BINDING PROTEIN HFQ"/>
    <property type="match status" value="1"/>
</dbReference>
<dbReference type="Pfam" id="PF17209">
    <property type="entry name" value="Hfq"/>
    <property type="match status" value="1"/>
</dbReference>
<dbReference type="SUPFAM" id="SSF50182">
    <property type="entry name" value="Sm-like ribonucleoproteins"/>
    <property type="match status" value="1"/>
</dbReference>
<dbReference type="PROSITE" id="PS52002">
    <property type="entry name" value="SM"/>
    <property type="match status" value="1"/>
</dbReference>
<protein>
    <recommendedName>
        <fullName evidence="1">RNA-binding protein Hfq</fullName>
    </recommendedName>
</protein>
<keyword id="KW-0694">RNA-binding</keyword>
<keyword id="KW-0346">Stress response</keyword>
<reference key="1">
    <citation type="submission" date="2006-09" db="EMBL/GenBank/DDBJ databases">
        <title>Complete sequence of chromosome 1 of Shewanella sp. ANA-3.</title>
        <authorList>
            <person name="Copeland A."/>
            <person name="Lucas S."/>
            <person name="Lapidus A."/>
            <person name="Barry K."/>
            <person name="Detter J.C."/>
            <person name="Glavina del Rio T."/>
            <person name="Hammon N."/>
            <person name="Israni S."/>
            <person name="Dalin E."/>
            <person name="Tice H."/>
            <person name="Pitluck S."/>
            <person name="Chertkov O."/>
            <person name="Brettin T."/>
            <person name="Bruce D."/>
            <person name="Han C."/>
            <person name="Tapia R."/>
            <person name="Gilna P."/>
            <person name="Schmutz J."/>
            <person name="Larimer F."/>
            <person name="Land M."/>
            <person name="Hauser L."/>
            <person name="Kyrpides N."/>
            <person name="Kim E."/>
            <person name="Newman D."/>
            <person name="Salticov C."/>
            <person name="Konstantinidis K."/>
            <person name="Klappenback J."/>
            <person name="Tiedje J."/>
            <person name="Richardson P."/>
        </authorList>
    </citation>
    <scope>NUCLEOTIDE SEQUENCE [LARGE SCALE GENOMIC DNA]</scope>
    <source>
        <strain>ANA-3</strain>
    </source>
</reference>
<accession>A0KSR7</accession>
<sequence length="90" mass="9873">MAKGQSLQDPFLNALRRERVPVSIYLVNGIKLQGQVESFDQFVILLKNTVSQMVYKHAISTVVPARPFNVAGHQNAQGGYGAQDDMPSGE</sequence>
<evidence type="ECO:0000255" key="1">
    <source>
        <dbReference type="HAMAP-Rule" id="MF_00436"/>
    </source>
</evidence>
<evidence type="ECO:0000255" key="2">
    <source>
        <dbReference type="PROSITE-ProRule" id="PRU01346"/>
    </source>
</evidence>